<sequence>MSRITSMLVTHKKASISEIENAWHGDVEALLKWVSSHDTVEECAVLKTCNRVEIYVVSPRGEKVLFEIAKKARVSSRIIDIHDHDESLLHLLRLASGLESMIIGEDQILGQMKELYRTAKSLGYTGWVLDTAFKKAIQVGKRVRKETAINERSVSVGSAAVDLAEQILGGLEGKSVLVIGAGETGELISKALVSKNIGSLYVTNRTFGTALSLAASLGGTAVPYEEMKRKIREADVVISATSAPHYILLKDDIERAMEGRKNKLLIIDIANPRDVDEAVREIEGVELHNIDSLKQISDENMRLRMREIERVEAIIEEELELLRAKYKRREAEELLARIYSEAEKIKEQEVRRAMNKLSAYHTLGEIEQKVLMDMSHSIVNKIFAEPTKALKSAAERGNTEMLRYAMELFRLNQEESD</sequence>
<proteinExistence type="inferred from homology"/>
<evidence type="ECO:0000255" key="1">
    <source>
        <dbReference type="HAMAP-Rule" id="MF_00087"/>
    </source>
</evidence>
<evidence type="ECO:0000305" key="2"/>
<reference key="1">
    <citation type="submission" date="2006-10" db="EMBL/GenBank/DDBJ databases">
        <title>Complete sequence of Methanosaeta thermophila PT.</title>
        <authorList>
            <consortium name="US DOE Joint Genome Institute"/>
            <person name="Copeland A."/>
            <person name="Lucas S."/>
            <person name="Lapidus A."/>
            <person name="Barry K."/>
            <person name="Detter J.C."/>
            <person name="Glavina del Rio T."/>
            <person name="Hammon N."/>
            <person name="Israni S."/>
            <person name="Pitluck S."/>
            <person name="Chain P."/>
            <person name="Malfatti S."/>
            <person name="Shin M."/>
            <person name="Vergez L."/>
            <person name="Schmutz J."/>
            <person name="Larimer F."/>
            <person name="Land M."/>
            <person name="Hauser L."/>
            <person name="Kyrpides N."/>
            <person name="Kim E."/>
            <person name="Smith K.S."/>
            <person name="Ingram-Smith C."/>
            <person name="Richardson P."/>
        </authorList>
    </citation>
    <scope>NUCLEOTIDE SEQUENCE [LARGE SCALE GENOMIC DNA]</scope>
    <source>
        <strain>DSM 6194 / JCM 14653 / NBRC 101360 / PT</strain>
    </source>
</reference>
<comment type="function">
    <text evidence="1">Catalyzes the NADPH-dependent reduction of glutamyl-tRNA(Glu) to glutamate 1-semialdehyde (GSA).</text>
</comment>
<comment type="catalytic activity">
    <reaction evidence="1">
        <text>(S)-4-amino-5-oxopentanoate + tRNA(Glu) + NADP(+) = L-glutamyl-tRNA(Glu) + NADPH + H(+)</text>
        <dbReference type="Rhea" id="RHEA:12344"/>
        <dbReference type="Rhea" id="RHEA-COMP:9663"/>
        <dbReference type="Rhea" id="RHEA-COMP:9680"/>
        <dbReference type="ChEBI" id="CHEBI:15378"/>
        <dbReference type="ChEBI" id="CHEBI:57501"/>
        <dbReference type="ChEBI" id="CHEBI:57783"/>
        <dbReference type="ChEBI" id="CHEBI:58349"/>
        <dbReference type="ChEBI" id="CHEBI:78442"/>
        <dbReference type="ChEBI" id="CHEBI:78520"/>
        <dbReference type="EC" id="1.2.1.70"/>
    </reaction>
</comment>
<comment type="pathway">
    <text evidence="1">Porphyrin-containing compound metabolism; protoporphyrin-IX biosynthesis; 5-aminolevulinate from L-glutamyl-tRNA(Glu): step 1/2.</text>
</comment>
<comment type="subunit">
    <text evidence="1">Homodimer.</text>
</comment>
<comment type="domain">
    <text evidence="1">Possesses an unusual extended V-shaped dimeric structure with each monomer consisting of three distinct domains arranged along a curved 'spinal' alpha-helix. The N-terminal catalytic domain specifically recognizes the glutamate moiety of the substrate. The second domain is the NADPH-binding domain, and the third C-terminal domain is responsible for dimerization.</text>
</comment>
<comment type="miscellaneous">
    <text evidence="1">During catalysis, the active site Cys acts as a nucleophile attacking the alpha-carbonyl group of tRNA-bound glutamate with the formation of a thioester intermediate between enzyme and glutamate, and the concomitant release of tRNA(Glu). The thioester intermediate is finally reduced by direct hydride transfer from NADPH, to form the product GSA.</text>
</comment>
<comment type="similarity">
    <text evidence="1">Belongs to the glutamyl-tRNA reductase family.</text>
</comment>
<comment type="sequence caution" evidence="2">
    <conflict type="erroneous initiation">
        <sequence resource="EMBL-CDS" id="ABK13851"/>
    </conflict>
</comment>
<gene>
    <name evidence="1" type="primary">hemA</name>
    <name type="ordered locus">Mthe_0049</name>
</gene>
<keyword id="KW-0521">NADP</keyword>
<keyword id="KW-0560">Oxidoreductase</keyword>
<keyword id="KW-0627">Porphyrin biosynthesis</keyword>
<keyword id="KW-1185">Reference proteome</keyword>
<name>HEM1_METTP</name>
<organism>
    <name type="scientific">Methanothrix thermoacetophila (strain DSM 6194 / JCM 14653 / NBRC 101360 / PT)</name>
    <name type="common">Methanosaeta thermophila</name>
    <dbReference type="NCBI Taxonomy" id="349307"/>
    <lineage>
        <taxon>Archaea</taxon>
        <taxon>Methanobacteriati</taxon>
        <taxon>Methanobacteriota</taxon>
        <taxon>Stenosarchaea group</taxon>
        <taxon>Methanomicrobia</taxon>
        <taxon>Methanotrichales</taxon>
        <taxon>Methanotrichaceae</taxon>
        <taxon>Methanothrix</taxon>
    </lineage>
</organism>
<dbReference type="EC" id="1.2.1.70" evidence="1"/>
<dbReference type="EMBL" id="CP000477">
    <property type="protein sequence ID" value="ABK13851.1"/>
    <property type="status" value="ALT_INIT"/>
    <property type="molecule type" value="Genomic_DNA"/>
</dbReference>
<dbReference type="RefSeq" id="WP_175265633.1">
    <property type="nucleotide sequence ID" value="NC_008553.1"/>
</dbReference>
<dbReference type="SMR" id="A0B577"/>
<dbReference type="STRING" id="349307.Mthe_0049"/>
<dbReference type="GeneID" id="4462740"/>
<dbReference type="KEGG" id="mtp:Mthe_0049"/>
<dbReference type="HOGENOM" id="CLU_035113_0_0_2"/>
<dbReference type="OrthoDB" id="4562at2157"/>
<dbReference type="UniPathway" id="UPA00251">
    <property type="reaction ID" value="UER00316"/>
</dbReference>
<dbReference type="Proteomes" id="UP000000674">
    <property type="component" value="Chromosome"/>
</dbReference>
<dbReference type="GO" id="GO:0008883">
    <property type="term" value="F:glutamyl-tRNA reductase activity"/>
    <property type="evidence" value="ECO:0007669"/>
    <property type="project" value="UniProtKB-UniRule"/>
</dbReference>
<dbReference type="GO" id="GO:0050661">
    <property type="term" value="F:NADP binding"/>
    <property type="evidence" value="ECO:0007669"/>
    <property type="project" value="InterPro"/>
</dbReference>
<dbReference type="GO" id="GO:0019353">
    <property type="term" value="P:protoporphyrinogen IX biosynthetic process from glutamate"/>
    <property type="evidence" value="ECO:0007669"/>
    <property type="project" value="TreeGrafter"/>
</dbReference>
<dbReference type="CDD" id="cd05213">
    <property type="entry name" value="NAD_bind_Glutamyl_tRNA_reduct"/>
    <property type="match status" value="1"/>
</dbReference>
<dbReference type="FunFam" id="3.30.460.30:FF:000001">
    <property type="entry name" value="Glutamyl-tRNA reductase"/>
    <property type="match status" value="1"/>
</dbReference>
<dbReference type="FunFam" id="3.40.50.720:FF:000031">
    <property type="entry name" value="Glutamyl-tRNA reductase"/>
    <property type="match status" value="1"/>
</dbReference>
<dbReference type="Gene3D" id="3.30.460.30">
    <property type="entry name" value="Glutamyl-tRNA reductase, N-terminal domain"/>
    <property type="match status" value="1"/>
</dbReference>
<dbReference type="Gene3D" id="3.40.50.720">
    <property type="entry name" value="NAD(P)-binding Rossmann-like Domain"/>
    <property type="match status" value="1"/>
</dbReference>
<dbReference type="HAMAP" id="MF_00087">
    <property type="entry name" value="Glu_tRNA_reductase"/>
    <property type="match status" value="1"/>
</dbReference>
<dbReference type="InterPro" id="IPR000343">
    <property type="entry name" value="4pyrrol_synth_GluRdtase"/>
</dbReference>
<dbReference type="InterPro" id="IPR015896">
    <property type="entry name" value="4pyrrol_synth_GluRdtase_dimer"/>
</dbReference>
<dbReference type="InterPro" id="IPR015895">
    <property type="entry name" value="4pyrrol_synth_GluRdtase_N"/>
</dbReference>
<dbReference type="InterPro" id="IPR018214">
    <property type="entry name" value="GluRdtase_CS"/>
</dbReference>
<dbReference type="InterPro" id="IPR036453">
    <property type="entry name" value="GluRdtase_dimer_dom_sf"/>
</dbReference>
<dbReference type="InterPro" id="IPR036343">
    <property type="entry name" value="GluRdtase_N_sf"/>
</dbReference>
<dbReference type="InterPro" id="IPR036291">
    <property type="entry name" value="NAD(P)-bd_dom_sf"/>
</dbReference>
<dbReference type="InterPro" id="IPR006151">
    <property type="entry name" value="Shikm_DH/Glu-tRNA_Rdtase"/>
</dbReference>
<dbReference type="NCBIfam" id="TIGR01035">
    <property type="entry name" value="hemA"/>
    <property type="match status" value="1"/>
</dbReference>
<dbReference type="PANTHER" id="PTHR43013">
    <property type="entry name" value="GLUTAMYL-TRNA REDUCTASE"/>
    <property type="match status" value="1"/>
</dbReference>
<dbReference type="PANTHER" id="PTHR43013:SF1">
    <property type="entry name" value="GLUTAMYL-TRNA REDUCTASE"/>
    <property type="match status" value="1"/>
</dbReference>
<dbReference type="Pfam" id="PF00745">
    <property type="entry name" value="GlutR_dimer"/>
    <property type="match status" value="1"/>
</dbReference>
<dbReference type="Pfam" id="PF05201">
    <property type="entry name" value="GlutR_N"/>
    <property type="match status" value="1"/>
</dbReference>
<dbReference type="Pfam" id="PF01488">
    <property type="entry name" value="Shikimate_DH"/>
    <property type="match status" value="1"/>
</dbReference>
<dbReference type="PIRSF" id="PIRSF000445">
    <property type="entry name" value="4pyrrol_synth_GluRdtase"/>
    <property type="match status" value="1"/>
</dbReference>
<dbReference type="SUPFAM" id="SSF69742">
    <property type="entry name" value="Glutamyl tRNA-reductase catalytic, N-terminal domain"/>
    <property type="match status" value="1"/>
</dbReference>
<dbReference type="SUPFAM" id="SSF69075">
    <property type="entry name" value="Glutamyl tRNA-reductase dimerization domain"/>
    <property type="match status" value="1"/>
</dbReference>
<dbReference type="SUPFAM" id="SSF51735">
    <property type="entry name" value="NAD(P)-binding Rossmann-fold domains"/>
    <property type="match status" value="1"/>
</dbReference>
<dbReference type="PROSITE" id="PS00747">
    <property type="entry name" value="GLUTR"/>
    <property type="match status" value="1"/>
</dbReference>
<protein>
    <recommendedName>
        <fullName evidence="1">Glutamyl-tRNA reductase</fullName>
        <shortName evidence="1">GluTR</shortName>
        <ecNumber evidence="1">1.2.1.70</ecNumber>
    </recommendedName>
</protein>
<feature type="chain" id="PRO_0000335094" description="Glutamyl-tRNA reductase">
    <location>
        <begin position="1"/>
        <end position="417"/>
    </location>
</feature>
<feature type="active site" description="Nucleophile" evidence="1">
    <location>
        <position position="49"/>
    </location>
</feature>
<feature type="binding site" evidence="1">
    <location>
        <begin position="48"/>
        <end position="51"/>
    </location>
    <ligand>
        <name>substrate</name>
    </ligand>
</feature>
<feature type="binding site" evidence="1">
    <location>
        <position position="100"/>
    </location>
    <ligand>
        <name>substrate</name>
    </ligand>
</feature>
<feature type="binding site" evidence="1">
    <location>
        <begin position="105"/>
        <end position="107"/>
    </location>
    <ligand>
        <name>substrate</name>
    </ligand>
</feature>
<feature type="binding site" evidence="1">
    <location>
        <position position="111"/>
    </location>
    <ligand>
        <name>substrate</name>
    </ligand>
</feature>
<feature type="binding site" evidence="1">
    <location>
        <begin position="180"/>
        <end position="185"/>
    </location>
    <ligand>
        <name>NADP(+)</name>
        <dbReference type="ChEBI" id="CHEBI:58349"/>
    </ligand>
</feature>
<feature type="site" description="Important for activity" evidence="1">
    <location>
        <position position="90"/>
    </location>
</feature>
<accession>A0B577</accession>